<comment type="function">
    <text evidence="1">Catalyzes the NAD-dependent conversion of D-erythrose 4-phosphate to 4-phosphoerythronate.</text>
</comment>
<comment type="catalytic activity">
    <reaction evidence="1">
        <text>D-erythrose 4-phosphate + NAD(+) + H2O = 4-phospho-D-erythronate + NADH + 2 H(+)</text>
        <dbReference type="Rhea" id="RHEA:12056"/>
        <dbReference type="ChEBI" id="CHEBI:15377"/>
        <dbReference type="ChEBI" id="CHEBI:15378"/>
        <dbReference type="ChEBI" id="CHEBI:16897"/>
        <dbReference type="ChEBI" id="CHEBI:57540"/>
        <dbReference type="ChEBI" id="CHEBI:57945"/>
        <dbReference type="ChEBI" id="CHEBI:58766"/>
        <dbReference type="EC" id="1.2.1.72"/>
    </reaction>
</comment>
<comment type="pathway">
    <text evidence="1">Cofactor biosynthesis; pyridoxine 5'-phosphate biosynthesis; pyridoxine 5'-phosphate from D-erythrose 4-phosphate: step 1/5.</text>
</comment>
<comment type="subunit">
    <text evidence="1">Homotetramer.</text>
</comment>
<comment type="subcellular location">
    <subcellularLocation>
        <location evidence="1">Cytoplasm</location>
    </subcellularLocation>
</comment>
<comment type="similarity">
    <text evidence="1">Belongs to the glyceraldehyde-3-phosphate dehydrogenase family. Epd subfamily.</text>
</comment>
<keyword id="KW-0963">Cytoplasm</keyword>
<keyword id="KW-0520">NAD</keyword>
<keyword id="KW-0560">Oxidoreductase</keyword>
<keyword id="KW-0664">Pyridoxine biosynthesis</keyword>
<name>E4PD_SHESM</name>
<evidence type="ECO:0000255" key="1">
    <source>
        <dbReference type="HAMAP-Rule" id="MF_01640"/>
    </source>
</evidence>
<proteinExistence type="inferred from homology"/>
<protein>
    <recommendedName>
        <fullName evidence="1">D-erythrose-4-phosphate dehydrogenase</fullName>
        <shortName evidence="1">E4PDH</shortName>
        <ecNumber evidence="1">1.2.1.72</ecNumber>
    </recommendedName>
</protein>
<reference key="1">
    <citation type="submission" date="2006-08" db="EMBL/GenBank/DDBJ databases">
        <title>Complete sequence of Shewanella sp. MR-4.</title>
        <authorList>
            <consortium name="US DOE Joint Genome Institute"/>
            <person name="Copeland A."/>
            <person name="Lucas S."/>
            <person name="Lapidus A."/>
            <person name="Barry K."/>
            <person name="Detter J.C."/>
            <person name="Glavina del Rio T."/>
            <person name="Hammon N."/>
            <person name="Israni S."/>
            <person name="Dalin E."/>
            <person name="Tice H."/>
            <person name="Pitluck S."/>
            <person name="Kiss H."/>
            <person name="Brettin T."/>
            <person name="Bruce D."/>
            <person name="Han C."/>
            <person name="Tapia R."/>
            <person name="Gilna P."/>
            <person name="Schmutz J."/>
            <person name="Larimer F."/>
            <person name="Land M."/>
            <person name="Hauser L."/>
            <person name="Kyrpides N."/>
            <person name="Mikhailova N."/>
            <person name="Nealson K."/>
            <person name="Konstantinidis K."/>
            <person name="Klappenbach J."/>
            <person name="Tiedje J."/>
            <person name="Richardson P."/>
        </authorList>
    </citation>
    <scope>NUCLEOTIDE SEQUENCE [LARGE SCALE GENOMIC DNA]</scope>
    <source>
        <strain>MR-4</strain>
    </source>
</reference>
<feature type="chain" id="PRO_0000293166" description="D-erythrose-4-phosphate dehydrogenase">
    <location>
        <begin position="1"/>
        <end position="338"/>
    </location>
</feature>
<feature type="active site" description="Nucleophile" evidence="1">
    <location>
        <position position="154"/>
    </location>
</feature>
<feature type="binding site" evidence="1">
    <location>
        <begin position="11"/>
        <end position="12"/>
    </location>
    <ligand>
        <name>NAD(+)</name>
        <dbReference type="ChEBI" id="CHEBI:57540"/>
    </ligand>
</feature>
<feature type="binding site" evidence="1">
    <location>
        <begin position="153"/>
        <end position="155"/>
    </location>
    <ligand>
        <name>substrate</name>
    </ligand>
</feature>
<feature type="binding site" evidence="1">
    <location>
        <position position="199"/>
    </location>
    <ligand>
        <name>substrate</name>
    </ligand>
</feature>
<feature type="binding site" evidence="1">
    <location>
        <begin position="212"/>
        <end position="213"/>
    </location>
    <ligand>
        <name>substrate</name>
    </ligand>
</feature>
<feature type="binding site" evidence="1">
    <location>
        <position position="235"/>
    </location>
    <ligand>
        <name>substrate</name>
    </ligand>
</feature>
<feature type="binding site" evidence="1">
    <location>
        <position position="317"/>
    </location>
    <ligand>
        <name>NAD(+)</name>
        <dbReference type="ChEBI" id="CHEBI:57540"/>
    </ligand>
</feature>
<feature type="site" description="Activates thiol group during catalysis" evidence="1">
    <location>
        <position position="181"/>
    </location>
</feature>
<dbReference type="EC" id="1.2.1.72" evidence="1"/>
<dbReference type="EMBL" id="CP000446">
    <property type="protein sequence ID" value="ABI37854.1"/>
    <property type="molecule type" value="Genomic_DNA"/>
</dbReference>
<dbReference type="RefSeq" id="WP_011621569.1">
    <property type="nucleotide sequence ID" value="NC_008321.1"/>
</dbReference>
<dbReference type="SMR" id="Q0HM63"/>
<dbReference type="KEGG" id="she:Shewmr4_0774"/>
<dbReference type="HOGENOM" id="CLU_030140_0_0_6"/>
<dbReference type="UniPathway" id="UPA00244">
    <property type="reaction ID" value="UER00309"/>
</dbReference>
<dbReference type="GO" id="GO:0005737">
    <property type="term" value="C:cytoplasm"/>
    <property type="evidence" value="ECO:0007669"/>
    <property type="project" value="UniProtKB-SubCell"/>
</dbReference>
<dbReference type="GO" id="GO:0048001">
    <property type="term" value="F:erythrose-4-phosphate dehydrogenase activity"/>
    <property type="evidence" value="ECO:0007669"/>
    <property type="project" value="UniProtKB-UniRule"/>
</dbReference>
<dbReference type="GO" id="GO:0051287">
    <property type="term" value="F:NAD binding"/>
    <property type="evidence" value="ECO:0007669"/>
    <property type="project" value="InterPro"/>
</dbReference>
<dbReference type="GO" id="GO:0042823">
    <property type="term" value="P:pyridoxal phosphate biosynthetic process"/>
    <property type="evidence" value="ECO:0007669"/>
    <property type="project" value="UniProtKB-UniRule"/>
</dbReference>
<dbReference type="GO" id="GO:0008615">
    <property type="term" value="P:pyridoxine biosynthetic process"/>
    <property type="evidence" value="ECO:0007669"/>
    <property type="project" value="UniProtKB-UniRule"/>
</dbReference>
<dbReference type="CDD" id="cd23937">
    <property type="entry name" value="GAPDH_C_E4PDH"/>
    <property type="match status" value="1"/>
</dbReference>
<dbReference type="CDD" id="cd17892">
    <property type="entry name" value="GAPDH_N_E4PDH"/>
    <property type="match status" value="1"/>
</dbReference>
<dbReference type="FunFam" id="3.30.360.10:FF:000007">
    <property type="entry name" value="D-erythrose-4-phosphate dehydrogenase"/>
    <property type="match status" value="1"/>
</dbReference>
<dbReference type="FunFam" id="3.40.50.720:FF:000001">
    <property type="entry name" value="Glyceraldehyde-3-phosphate dehydrogenase"/>
    <property type="match status" value="1"/>
</dbReference>
<dbReference type="Gene3D" id="3.30.360.10">
    <property type="entry name" value="Dihydrodipicolinate Reductase, domain 2"/>
    <property type="match status" value="1"/>
</dbReference>
<dbReference type="Gene3D" id="3.40.50.720">
    <property type="entry name" value="NAD(P)-binding Rossmann-like Domain"/>
    <property type="match status" value="1"/>
</dbReference>
<dbReference type="HAMAP" id="MF_01640">
    <property type="entry name" value="E4P_dehydrog"/>
    <property type="match status" value="1"/>
</dbReference>
<dbReference type="InterPro" id="IPR006422">
    <property type="entry name" value="E4P_DH_bac"/>
</dbReference>
<dbReference type="InterPro" id="IPR020831">
    <property type="entry name" value="GlycerAld/Erythrose_P_DH"/>
</dbReference>
<dbReference type="InterPro" id="IPR020830">
    <property type="entry name" value="GlycerAld_3-P_DH_AS"/>
</dbReference>
<dbReference type="InterPro" id="IPR020829">
    <property type="entry name" value="GlycerAld_3-P_DH_cat"/>
</dbReference>
<dbReference type="InterPro" id="IPR020828">
    <property type="entry name" value="GlycerAld_3-P_DH_NAD(P)-bd"/>
</dbReference>
<dbReference type="InterPro" id="IPR036291">
    <property type="entry name" value="NAD(P)-bd_dom_sf"/>
</dbReference>
<dbReference type="NCBIfam" id="TIGR01532">
    <property type="entry name" value="E4PD_g-proteo"/>
    <property type="match status" value="1"/>
</dbReference>
<dbReference type="NCBIfam" id="NF010058">
    <property type="entry name" value="PRK13535.1"/>
    <property type="match status" value="1"/>
</dbReference>
<dbReference type="PANTHER" id="PTHR43148">
    <property type="entry name" value="GLYCERALDEHYDE-3-PHOSPHATE DEHYDROGENASE 2"/>
    <property type="match status" value="1"/>
</dbReference>
<dbReference type="Pfam" id="PF02800">
    <property type="entry name" value="Gp_dh_C"/>
    <property type="match status" value="1"/>
</dbReference>
<dbReference type="Pfam" id="PF00044">
    <property type="entry name" value="Gp_dh_N"/>
    <property type="match status" value="1"/>
</dbReference>
<dbReference type="PIRSF" id="PIRSF000149">
    <property type="entry name" value="GAP_DH"/>
    <property type="match status" value="1"/>
</dbReference>
<dbReference type="PRINTS" id="PR00078">
    <property type="entry name" value="G3PDHDRGNASE"/>
</dbReference>
<dbReference type="SMART" id="SM00846">
    <property type="entry name" value="Gp_dh_N"/>
    <property type="match status" value="1"/>
</dbReference>
<dbReference type="SUPFAM" id="SSF55347">
    <property type="entry name" value="Glyceraldehyde-3-phosphate dehydrogenase-like, C-terminal domain"/>
    <property type="match status" value="1"/>
</dbReference>
<dbReference type="SUPFAM" id="SSF51735">
    <property type="entry name" value="NAD(P)-binding Rossmann-fold domains"/>
    <property type="match status" value="1"/>
</dbReference>
<dbReference type="PROSITE" id="PS00071">
    <property type="entry name" value="GAPDH"/>
    <property type="match status" value="1"/>
</dbReference>
<organism>
    <name type="scientific">Shewanella sp. (strain MR-4)</name>
    <dbReference type="NCBI Taxonomy" id="60480"/>
    <lineage>
        <taxon>Bacteria</taxon>
        <taxon>Pseudomonadati</taxon>
        <taxon>Pseudomonadota</taxon>
        <taxon>Gammaproteobacteria</taxon>
        <taxon>Alteromonadales</taxon>
        <taxon>Shewanellaceae</taxon>
        <taxon>Shewanella</taxon>
    </lineage>
</organism>
<gene>
    <name evidence="1" type="primary">epd</name>
    <name type="ordered locus">Shewmr4_0774</name>
</gene>
<sequence length="338" mass="37210">MIRVAINGYGRIGRSILRALYESGKRQQIQIVAINELAKPEAIVHLTQYDTTHGRFQPRVKLVDDQMLIGDDVIKILHEPDPAKLPWHEMDIDIVYEATGAILDRNSCEAHIHAGAKQVLISHPSSADVDGTIVYGVNQDLLRAEHTVVSNASCTTNCIVPVIDVLDKHFGVKSGAITTIHSAMNDQQVIDAYHDDLRRTRAAGQSIIPVDTKLARGIERILPHMKDKFEAISVRVPTINVTAIDLSVTLDKTVDIATVNQVLELAANGRFNGILGYTDEPLVSCDFNHDPRSSIVDGTQTRVSAGQLVKLLLWCDNEWGFANRMLDTSLAMIAAKQS</sequence>
<accession>Q0HM63</accession>